<sequence>MSLASDKKDADVASTTTTAQDDDNLSTYHGFDHHVQDQVRQLARTLTQQSSLHQKKEHTLPEEGINPIFTNTEADDYNPRLDPTSDEFSSAEWVQNMSNISNSDPDYYKPYSLGCYWKDLVATGESADIEYQANFLNGPYKGLKTVYNTVVPSTASSKDKNFKILKSMEGAVNPGELLVVLGRPGSGCTTLLKSISSNTHGFNIAKESTISYSGMTPNDIRKHFRGEVVYNAEADIHLPHLTVYQTLLTVARLKTPQNRLKGIDRETYARHLTEVAMATFGLSHTRNTKVGNDLVRGVSGGERKRVSIAEVSICGSKFQCWDNATRGLDSATALEFIRALKVQASISNAAATVAIYQCSQDAYDLFDKVCVLYDGYQIYFGPAGKAKEYFQKMGYVSPERQTTADFLTAVTSPSERIINQDYINRGIFVPQTPKEMWEYWRASEDHADLIKEIDSKLSDNYDANLAEIKDAHVARQSKRARPSSPYTVSYGMQIKYLLIRNFWRIKQSSGVTLFMVIGNSSMAFILGSMFYKVMKHNTTSTFYFRGAAMFFAVLFNAFSSLLEIFSLFEARPITEKHRTYSLYHPSADAFASILSEVPAKLITAVCFNIIYYFLVNFRRNGGVFFFYFLINIVAVFAMSHLFRCVGSVSKTLSAAMVPASMLLLGLSMYSGFAIPRTKILGWSKWIWYINPLAYLFESLMINEFHDRKFPCSQYIPSGSVYNNVPADSRICSSVGAIRGNDYVLGDDFLRESYSYLHKHKWRGFGIGLAYVIFFLVLYLILCEYNEGAKQKGEILVFPQNIVRRMKKERKLKNVSSDNDVEIGDVSDISDKKILADSSDESEESGANIGLSQSEAIFHWRNLCYDVQIKKETRRILNNVDGWVKPGTLTALMGASGAGKTTLLDCLAERVTMGVITGEVSVDGKQRDDSFARSIGYCQQQDLHLKTSTVRESLRFSAYLRQPADVSIEEKNQYVEDVIKILEMEQYADAVVGVPGEGLNVEQRKRLTIGVELAAKPKLLVFLDEPTSGLDSQTAWSICQLMKKLANHGQAILCTIHQPSAILMQEFDRLLFLQRGGKTVYFGDLGDGCKTMIDYFESHGSHKCPPDANPAEWMLEVVGAAPGSHANQDYHEVWRNSDEYQKVQEELEWMSNELPKKNTNNSETVHKEFATGVLYQCKLVSLRLFQQYWRSPDYLWSKFFLTIFNNIFIGFTFFKADRSLQGLQNQMLAVFMFTVIFNPLLQQYLPSFVQQRDLYEARERPSRTFSWKAFIVSQILVEIPWNILAGTVAFVIYYYAIGFYSNASVAHQLHERGALFWLFSCAFYVYIGSLALFCISFNQVAEAAANMASLMFTLSLSFCGVLVTPNGMPRFWIFMYRVSPLTYLIDGMLSTGVANVAIKCSNYELLRFSPAANLTCGEYLGPYLQTVKTGYIVDPSATDTCELCPYSHTNDFLSSVSSKYSRRWRNWGIFICYIAFNYIAGIFLYWLARVPKKSGKLAKK</sequence>
<dbReference type="EMBL" id="CR380959">
    <property type="protein sequence ID" value="CAG62397.1"/>
    <property type="molecule type" value="Genomic_DNA"/>
</dbReference>
<dbReference type="RefSeq" id="XP_449421.1">
    <property type="nucleotide sequence ID" value="XM_449421.1"/>
</dbReference>
<dbReference type="SMR" id="Q6FK23"/>
<dbReference type="FunCoup" id="Q6FK23">
    <property type="interactions" value="401"/>
</dbReference>
<dbReference type="STRING" id="284593.Q6FK23"/>
<dbReference type="GlyCosmos" id="Q6FK23">
    <property type="glycosylation" value="9 sites, No reported glycans"/>
</dbReference>
<dbReference type="iPTMnet" id="Q6FK23"/>
<dbReference type="EnsemblFungi" id="CAGL0M01760g-T">
    <property type="protein sequence ID" value="CAGL0M01760g-T-p1"/>
    <property type="gene ID" value="CAGL0M01760g"/>
</dbReference>
<dbReference type="GeneID" id="2891191"/>
<dbReference type="KEGG" id="cgr:2891191"/>
<dbReference type="CGD" id="CAL0136775">
    <property type="gene designation" value="CDR1"/>
</dbReference>
<dbReference type="VEuPathDB" id="FungiDB:B1J91_M01760g"/>
<dbReference type="VEuPathDB" id="FungiDB:CAGL0M01760g"/>
<dbReference type="eggNOG" id="KOG0065">
    <property type="taxonomic scope" value="Eukaryota"/>
</dbReference>
<dbReference type="HOGENOM" id="CLU_000604_35_0_1"/>
<dbReference type="InParanoid" id="Q6FK23"/>
<dbReference type="OMA" id="RTSMRHD"/>
<dbReference type="Proteomes" id="UP000002428">
    <property type="component" value="Chromosome M"/>
</dbReference>
<dbReference type="GO" id="GO:0005886">
    <property type="term" value="C:plasma membrane"/>
    <property type="evidence" value="ECO:0000314"/>
    <property type="project" value="CGD"/>
</dbReference>
<dbReference type="GO" id="GO:0005775">
    <property type="term" value="C:vacuolar lumen"/>
    <property type="evidence" value="ECO:0000314"/>
    <property type="project" value="CGD"/>
</dbReference>
<dbReference type="GO" id="GO:0008559">
    <property type="term" value="F:ABC-type xenobiotic transporter activity"/>
    <property type="evidence" value="ECO:0000314"/>
    <property type="project" value="CGD"/>
</dbReference>
<dbReference type="GO" id="GO:0005524">
    <property type="term" value="F:ATP binding"/>
    <property type="evidence" value="ECO:0007669"/>
    <property type="project" value="UniProtKB-KW"/>
</dbReference>
<dbReference type="GO" id="GO:0016887">
    <property type="term" value="F:ATP hydrolysis activity"/>
    <property type="evidence" value="ECO:0000314"/>
    <property type="project" value="CGD"/>
</dbReference>
<dbReference type="GO" id="GO:0042802">
    <property type="term" value="F:identical protein binding"/>
    <property type="evidence" value="ECO:0007669"/>
    <property type="project" value="EnsemblFungi"/>
</dbReference>
<dbReference type="GO" id="GO:0045117">
    <property type="term" value="P:azole transmembrane transport"/>
    <property type="evidence" value="ECO:0000315"/>
    <property type="project" value="CGD"/>
</dbReference>
<dbReference type="GO" id="GO:0030003">
    <property type="term" value="P:intracellular monoatomic cation homeostasis"/>
    <property type="evidence" value="ECO:0007669"/>
    <property type="project" value="EnsemblFungi"/>
</dbReference>
<dbReference type="GO" id="GO:0009410">
    <property type="term" value="P:response to xenobiotic stimulus"/>
    <property type="evidence" value="ECO:0007669"/>
    <property type="project" value="EnsemblFungi"/>
</dbReference>
<dbReference type="GO" id="GO:1990961">
    <property type="term" value="P:xenobiotic detoxification by transmembrane export across the plasma membrane"/>
    <property type="evidence" value="ECO:0000247"/>
    <property type="project" value="CGD"/>
</dbReference>
<dbReference type="CDD" id="cd03233">
    <property type="entry name" value="ABCG_PDR_domain1"/>
    <property type="match status" value="1"/>
</dbReference>
<dbReference type="CDD" id="cd03232">
    <property type="entry name" value="ABCG_PDR_domain2"/>
    <property type="match status" value="1"/>
</dbReference>
<dbReference type="FunFam" id="3.40.50.300:FF:000054">
    <property type="entry name" value="ABC multidrug transporter atrF"/>
    <property type="match status" value="1"/>
</dbReference>
<dbReference type="FunFam" id="3.40.50.300:FF:001262">
    <property type="entry name" value="ABC transporter CDR4"/>
    <property type="match status" value="1"/>
</dbReference>
<dbReference type="Gene3D" id="3.40.50.300">
    <property type="entry name" value="P-loop containing nucleotide triphosphate hydrolases"/>
    <property type="match status" value="2"/>
</dbReference>
<dbReference type="InterPro" id="IPR003593">
    <property type="entry name" value="AAA+_ATPase"/>
</dbReference>
<dbReference type="InterPro" id="IPR013525">
    <property type="entry name" value="ABC2_TM"/>
</dbReference>
<dbReference type="InterPro" id="IPR029481">
    <property type="entry name" value="ABC_trans_N"/>
</dbReference>
<dbReference type="InterPro" id="IPR003439">
    <property type="entry name" value="ABC_transporter-like_ATP-bd"/>
</dbReference>
<dbReference type="InterPro" id="IPR017871">
    <property type="entry name" value="ABC_transporter-like_CS"/>
</dbReference>
<dbReference type="InterPro" id="IPR034001">
    <property type="entry name" value="ABCG_PDR_1"/>
</dbReference>
<dbReference type="InterPro" id="IPR034003">
    <property type="entry name" value="ABCG_PDR_2"/>
</dbReference>
<dbReference type="InterPro" id="IPR005285">
    <property type="entry name" value="Drug-R_PDR/CDR"/>
</dbReference>
<dbReference type="InterPro" id="IPR027417">
    <property type="entry name" value="P-loop_NTPase"/>
</dbReference>
<dbReference type="InterPro" id="IPR010929">
    <property type="entry name" value="PDR_CDR_ABC"/>
</dbReference>
<dbReference type="NCBIfam" id="TIGR00956">
    <property type="entry name" value="3a01205"/>
    <property type="match status" value="1"/>
</dbReference>
<dbReference type="PANTHER" id="PTHR19241">
    <property type="entry name" value="ATP-BINDING CASSETTE TRANSPORTER"/>
    <property type="match status" value="1"/>
</dbReference>
<dbReference type="Pfam" id="PF01061">
    <property type="entry name" value="ABC2_membrane"/>
    <property type="match status" value="2"/>
</dbReference>
<dbReference type="Pfam" id="PF00005">
    <property type="entry name" value="ABC_tran"/>
    <property type="match status" value="2"/>
</dbReference>
<dbReference type="Pfam" id="PF14510">
    <property type="entry name" value="ABC_trans_N"/>
    <property type="match status" value="1"/>
</dbReference>
<dbReference type="Pfam" id="PF06422">
    <property type="entry name" value="PDR_CDR"/>
    <property type="match status" value="1"/>
</dbReference>
<dbReference type="SMART" id="SM00382">
    <property type="entry name" value="AAA"/>
    <property type="match status" value="2"/>
</dbReference>
<dbReference type="SUPFAM" id="SSF52540">
    <property type="entry name" value="P-loop containing nucleoside triphosphate hydrolases"/>
    <property type="match status" value="2"/>
</dbReference>
<dbReference type="PROSITE" id="PS00211">
    <property type="entry name" value="ABC_TRANSPORTER_1"/>
    <property type="match status" value="1"/>
</dbReference>
<dbReference type="PROSITE" id="PS50893">
    <property type="entry name" value="ABC_TRANSPORTER_2"/>
    <property type="match status" value="2"/>
</dbReference>
<feature type="chain" id="PRO_0000445080" description="Pleiotropic ABC efflux transporter of multiple drugs CDR1">
    <location>
        <begin position="1"/>
        <end position="1499"/>
    </location>
</feature>
<feature type="transmembrane region" description="Helical" evidence="1">
    <location>
        <begin position="510"/>
        <end position="530"/>
    </location>
</feature>
<feature type="transmembrane region" description="Helical" evidence="1">
    <location>
        <begin position="548"/>
        <end position="568"/>
    </location>
</feature>
<feature type="transmembrane region" description="Helical" evidence="1">
    <location>
        <begin position="597"/>
        <end position="617"/>
    </location>
</feature>
<feature type="transmembrane region" description="Helical" evidence="1">
    <location>
        <begin position="622"/>
        <end position="642"/>
    </location>
</feature>
<feature type="transmembrane region" description="Helical" evidence="1">
    <location>
        <begin position="654"/>
        <end position="674"/>
    </location>
</feature>
<feature type="transmembrane region" description="Helical" evidence="1">
    <location>
        <begin position="763"/>
        <end position="783"/>
    </location>
</feature>
<feature type="transmembrane region" description="Helical" evidence="1">
    <location>
        <begin position="1193"/>
        <end position="1213"/>
    </location>
</feature>
<feature type="transmembrane region" description="Helical" evidence="1">
    <location>
        <begin position="1228"/>
        <end position="1248"/>
    </location>
</feature>
<feature type="transmembrane region" description="Helical" evidence="1">
    <location>
        <begin position="1278"/>
        <end position="1298"/>
    </location>
</feature>
<feature type="transmembrane region" description="Helical" evidence="1">
    <location>
        <begin position="1314"/>
        <end position="1334"/>
    </location>
</feature>
<feature type="transmembrane region" description="Helical" evidence="1">
    <location>
        <begin position="1342"/>
        <end position="1362"/>
    </location>
</feature>
<feature type="transmembrane region" description="Helical" evidence="1">
    <location>
        <begin position="1466"/>
        <end position="1486"/>
    </location>
</feature>
<feature type="domain" description="ABC transporter 1" evidence="2">
    <location>
        <begin position="146"/>
        <end position="399"/>
    </location>
</feature>
<feature type="domain" description="ABC transporter 2" evidence="2">
    <location>
        <begin position="857"/>
        <end position="1099"/>
    </location>
</feature>
<feature type="region of interest" description="Disordered" evidence="4">
    <location>
        <begin position="1"/>
        <end position="29"/>
    </location>
</feature>
<feature type="compositionally biased region" description="Basic and acidic residues" evidence="4">
    <location>
        <begin position="1"/>
        <end position="11"/>
    </location>
</feature>
<feature type="binding site" evidence="2">
    <location>
        <begin position="893"/>
        <end position="900"/>
    </location>
    <ligand>
        <name>ATP</name>
        <dbReference type="ChEBI" id="CHEBI:30616"/>
    </ligand>
</feature>
<feature type="modified residue" description="Phosphoserine" evidence="12">
    <location>
        <position position="307"/>
    </location>
</feature>
<feature type="modified residue" description="Phosphoserine" evidence="12">
    <location>
        <position position="484"/>
    </location>
</feature>
<feature type="glycosylation site" description="N-linked (GlcNAc...) asparagine" evidence="3">
    <location>
        <position position="24"/>
    </location>
</feature>
<feature type="glycosylation site" description="N-linked (GlcNAc...) asparagine" evidence="3">
    <location>
        <position position="96"/>
    </location>
</feature>
<feature type="glycosylation site" description="N-linked (GlcNAc...) asparagine" evidence="3">
    <location>
        <position position="99"/>
    </location>
</feature>
<feature type="glycosylation site" description="N-linked (GlcNAc...) asparagine" evidence="3">
    <location>
        <position position="323"/>
    </location>
</feature>
<feature type="glycosylation site" description="N-linked (GlcNAc...) asparagine" evidence="3">
    <location>
        <position position="537"/>
    </location>
</feature>
<feature type="glycosylation site" description="N-linked (GlcNAc...) asparagine" evidence="3">
    <location>
        <position position="813"/>
    </location>
</feature>
<feature type="glycosylation site" description="N-linked (GlcNAc...) asparagine" evidence="3">
    <location>
        <position position="1159"/>
    </location>
</feature>
<feature type="glycosylation site" description="N-linked (GlcNAc...) asparagine" evidence="3">
    <location>
        <position position="1301"/>
    </location>
</feature>
<feature type="glycosylation site" description="N-linked (GlcNAc...) asparagine" evidence="3">
    <location>
        <position position="1412"/>
    </location>
</feature>
<feature type="mutagenesis site" description="Leads to loss of resistance to cycloheximide, DE-11, fluconazole, voriconazole, and ketoconazole." evidence="27">
    <original>C</original>
    <variation>A</variation>
    <location>
        <position position="188"/>
    </location>
</feature>
<feature type="mutagenesis site" description="Fails to efflux the substrate rhodamine 6G, and increases fluconazole susceptibility; when associated with A-484." evidence="12">
    <original>S</original>
    <variation>A</variation>
    <location>
        <position position="307"/>
    </location>
</feature>
<feature type="mutagenesis site" description="Fails to efflux the substrate rhodamine 6G, and increases fluconazole susceptibility; when associated with A-307." evidence="12">
    <original>S</original>
    <variation>A</variation>
    <location>
        <position position="484"/>
    </location>
</feature>
<feature type="mutagenesis site" description="Leads to loss of resistance to cycloheximide, DE-11, fluconazole, voriconazole, and ketoconazole." evidence="27">
    <original>S</original>
    <variation>A</variation>
    <location>
        <position position="660"/>
    </location>
</feature>
<feature type="mutagenesis site" description="Leads to loss of resistance to cycloheximide, DE-11, fluconazole, voriconazole, and ketoconazole." evidence="27">
    <location>
        <position position="773"/>
    </location>
</feature>
<proteinExistence type="evidence at protein level"/>
<comment type="function">
    <text evidence="5 7 9 10 11 12 14 17 18 19 24 25 27 31 33 40 41 43 46">Pleiotropic ABC efflux transporter that transports and confers resistance to structurally and functionally unrelated compounds including rhodamine 6G, Nile red, caspofungin, cycloheximide, or azoles such as fluconazole, itraconazole, ketoconazole, posaconazole, voriconazole, and isavuconazole (PubMed:10543759, PubMed:12244114, PubMed:15105111, PubMed:15105136, PubMed:15388433, PubMed:15498768, PubMed:16803598, PubMed:17581937, PubMed:18591262, PubMed:20038613, PubMed:20450660, PubMed:21134356, PubMed:21408004, PubMed:22788839, PubMed:26482310, PubMed:27486188, PubMed:29371812, PubMed:29784839). Chlorbromuron, itraconazole, yohimbine, ketoconazole, miconazole, clotrimazole, DE-11, tamoxifen, quinidine, verapamil can compete for rhodamine 6G's binding site(s) while compounds such as propanil, chloramphenicol, benomyl, voriconazole, tritylimidazole, ketoconazole, miconazole, tamoxifen, gefitinib shared binding site(s) with fluconazole. Nile red mediated efflux appears to be relatively more specific since only five compounds such as ZW3-12, rhodamine 123, miconazole, clotrimazole, and itraconazole can inhibit its accumulation (PubMed:21134356). Does not use as substrates 4-nitroquinoline 1-oxide (4-NQO) and disulfiram (PubMed:21134356). Does not play a role in the azole resistance in mature biofilms (PubMed:18651314).</text>
</comment>
<comment type="activity regulation">
    <text evidence="32 33 34 38">Inhibited by clorgyline (PubMed:22203607). Inhibited by RC21v3, a 4-methoxy-2,3,6-trimethylbenzenesulphonyl derivative of the D-octapeptide D-FFKWQRRR, via the interaction with the ectodomain (PubMed:22788839). FK506, enniatin, milbemycin alpha-11, and milbemycin beta-9 also inhibit CDR1 activity (PubMed:22788839). Inhibited by milbemycin A3/A4 oxim derivatives (PubMed:23208712, PubMed:24838041).</text>
</comment>
<comment type="subcellular location">
    <subcellularLocation>
        <location evidence="7 27">Cell membrane</location>
        <topology evidence="1">Multi-pass membrane protein</topology>
    </subcellularLocation>
</comment>
<comment type="induction">
    <text evidence="5 8 13 14 15 16 17 18 19 20 21 22 23 24 25 26 27 28 29 30 31 35 36 37 39 41 42 43 44 45 46">Azole exposure induced expression 4- to 12-fold via regulation by the transcription factor PDR1 that stimulates gene expression via binding to elements called pleiotropic drug response elements (PDREs) (PubMed:10543759, PubMed:12458010, PubMed:16803598, PubMed:19148266, PubMed:21131438, PubMed:21193550, PubMed:21408004, PubMed:23979762, PubMed:24645630, PubMed:29464833). Expression is highly up-regulated in azole-resistant isolates (PubMed:10543759, PubMed:16735426, PubMed:16891541, PubMed:17158937, PubMed:17581937, PubMed:18591262, PubMed:18782778, PubMed:19196495, PubMed:19380598, PubMed:20038613, PubMed:20450660, PubMed:21134356, PubMed:25818698, PubMed:27486188, PubMed:28894714, PubMed:29371812, PubMed:29784839). Loss of mitochondrial functions leads to increased expression (PubMed:21321146). Expression is temporary increased during the intermediate phase of biofilm development (PubMed:18651314). Expression is down-regulated by the transcription factor STB5 (PubMed:23229483). Expression is negatively regulated by the transcription factor JJJ1 via inactivation of the PDR1 transcriptional pathway (PubMed:29507891). Expression is also decreased by amphotericin B in voriconazole-resistant strains (PubMed:21282443).</text>
</comment>
<comment type="PTM">
    <text evidence="7 12">Phosphorylated at Ser-307 and Ser-484. Ser-307 and Ser-484 are dephosphorylated on glucose depletion and independently rephosphorylated during glucose exposure or under stress.</text>
</comment>
<comment type="disruption phenotype">
    <text evidence="5 6 14">Leads to susceptibility to the antifungal azole derivatives in azole-resistant clinical isolates (PubMed:10543759, PubMed:16803598). Suppresses the development of high-frequency azole resistance (HFAR) in a medium containing fluconazole (PubMed:11257032).</text>
</comment>
<comment type="similarity">
    <text evidence="48">Belongs to the ABC transporter superfamily.</text>
</comment>
<protein>
    <recommendedName>
        <fullName evidence="47">Pleiotropic ABC efflux transporter of multiple drugs CDR1</fullName>
    </recommendedName>
    <alternativeName>
        <fullName evidence="47">Pleiotropic drug resistance protein CDR1</fullName>
    </alternativeName>
</protein>
<reference key="1">
    <citation type="journal article" date="2004" name="Nature">
        <title>Genome evolution in yeasts.</title>
        <authorList>
            <person name="Dujon B."/>
            <person name="Sherman D."/>
            <person name="Fischer G."/>
            <person name="Durrens P."/>
            <person name="Casaregola S."/>
            <person name="Lafontaine I."/>
            <person name="de Montigny J."/>
            <person name="Marck C."/>
            <person name="Neuveglise C."/>
            <person name="Talla E."/>
            <person name="Goffard N."/>
            <person name="Frangeul L."/>
            <person name="Aigle M."/>
            <person name="Anthouard V."/>
            <person name="Babour A."/>
            <person name="Barbe V."/>
            <person name="Barnay S."/>
            <person name="Blanchin S."/>
            <person name="Beckerich J.-M."/>
            <person name="Beyne E."/>
            <person name="Bleykasten C."/>
            <person name="Boisrame A."/>
            <person name="Boyer J."/>
            <person name="Cattolico L."/>
            <person name="Confanioleri F."/>
            <person name="de Daruvar A."/>
            <person name="Despons L."/>
            <person name="Fabre E."/>
            <person name="Fairhead C."/>
            <person name="Ferry-Dumazet H."/>
            <person name="Groppi A."/>
            <person name="Hantraye F."/>
            <person name="Hennequin C."/>
            <person name="Jauniaux N."/>
            <person name="Joyet P."/>
            <person name="Kachouri R."/>
            <person name="Kerrest A."/>
            <person name="Koszul R."/>
            <person name="Lemaire M."/>
            <person name="Lesur I."/>
            <person name="Ma L."/>
            <person name="Muller H."/>
            <person name="Nicaud J.-M."/>
            <person name="Nikolski M."/>
            <person name="Oztas S."/>
            <person name="Ozier-Kalogeropoulos O."/>
            <person name="Pellenz S."/>
            <person name="Potier S."/>
            <person name="Richard G.-F."/>
            <person name="Straub M.-L."/>
            <person name="Suleau A."/>
            <person name="Swennen D."/>
            <person name="Tekaia F."/>
            <person name="Wesolowski-Louvel M."/>
            <person name="Westhof E."/>
            <person name="Wirth B."/>
            <person name="Zeniou-Meyer M."/>
            <person name="Zivanovic Y."/>
            <person name="Bolotin-Fukuhara M."/>
            <person name="Thierry A."/>
            <person name="Bouchier C."/>
            <person name="Caudron B."/>
            <person name="Scarpelli C."/>
            <person name="Gaillardin C."/>
            <person name="Weissenbach J."/>
            <person name="Wincker P."/>
            <person name="Souciet J.-L."/>
        </authorList>
    </citation>
    <scope>NUCLEOTIDE SEQUENCE [LARGE SCALE GENOMIC DNA]</scope>
    <source>
        <strain>ATCC 2001 / BCRC 20586 / JCM 3761 / NBRC 0622 / NRRL Y-65 / CBS 138</strain>
    </source>
</reference>
<reference key="2">
    <citation type="journal article" date="1999" name="Antimicrob. Agents Chemother.">
        <title>The ATP binding cassette transporter gene CgCDR1 from Candida glabrata is involved in the resistance of clinical isolates to azole antifungal agents.</title>
        <authorList>
            <person name="Sanglard D."/>
            <person name="Ischer F."/>
            <person name="Calabrese D."/>
            <person name="Majcherczyk P.A."/>
            <person name="Bille J."/>
        </authorList>
    </citation>
    <scope>FUNCTION</scope>
    <scope>DISRUPTION PHENOTYPE</scope>
    <scope>INDUCTION</scope>
</reference>
<reference key="3">
    <citation type="journal article" date="2001" name="Antimicrob. Agents Chemother.">
        <title>Role of ATP-binding-cassette transporter genes in high-frequency acquisition of resistance to azole antifungals in Candida glabrata.</title>
        <authorList>
            <person name="Sanglard D."/>
            <person name="Ischer F."/>
            <person name="Bille J."/>
        </authorList>
    </citation>
    <scope>FUNCTION</scope>
    <scope>DISRUPTION PHENOTYPE</scope>
</reference>
<reference key="4">
    <citation type="journal article" date="2002" name="J. Biol. Chem.">
        <title>Candida glabrata ATP-binding cassette transporters Cdr1p and Pdh1p expressed in a Saccharomyces cerevisiae strain deficient in membrane transporters show phosphorylation-dependent pumping properties.</title>
        <authorList>
            <person name="Wada S."/>
            <person name="Niimi M."/>
            <person name="Niimi K."/>
            <person name="Holmes A.R."/>
            <person name="Monk B.C."/>
            <person name="Cannon R.D."/>
            <person name="Uehara Y."/>
        </authorList>
    </citation>
    <scope>FUNCTION</scope>
    <scope>PHOSPHORYLATION</scope>
    <scope>SUBCELLULAR LOCATION</scope>
</reference>
<reference key="5">
    <citation type="journal article" date="2002" name="J. Chromatogr. B">
        <title>Identification of two proteins induced by exposure of the pathogenic fungus Candida glabrata to fluconazole.</title>
        <authorList>
            <person name="Niimi M."/>
            <person name="Nagai Y."/>
            <person name="Niimi K."/>
            <person name="Wada S.I."/>
            <person name="Cannon R.D."/>
            <person name="Uehara Y."/>
            <person name="Monk B.C."/>
        </authorList>
    </citation>
    <scope>INDUCTION</scope>
</reference>
<reference key="6">
    <citation type="journal article" date="2004" name="Antimicrob. Agents Chemother.">
        <title>Functional genomic analysis of fluconazole susceptibility in the pathogenic yeast Candida glabrata: roles of calcium signaling and mitochondria.</title>
        <authorList>
            <person name="Kaur R."/>
            <person name="Castano I."/>
            <person name="Cormack B.P."/>
        </authorList>
    </citation>
    <scope>FUNCTION</scope>
</reference>
<reference key="7">
    <citation type="journal article" date="2004" name="Antimicrob. Agents Chemother.">
        <title>Mechanisms of azole resistance in petite mutants of Candida glabrata.</title>
        <authorList>
            <person name="Brun S."/>
            <person name="Berges T."/>
            <person name="Poupard P."/>
            <person name="Vauzelle-Moreau C."/>
            <person name="Renier G."/>
            <person name="Chabasse D."/>
            <person name="Bouchara J.P."/>
        </authorList>
    </citation>
    <scope>FUNCTION</scope>
</reference>
<reference key="8">
    <citation type="journal article" date="2004" name="Antimicrob. Agents Chemother.">
        <title>Azole resistance in Candida glabrata: coordinate upregulation of multidrug transporters and evidence for a Pdr1-like transcription factor.</title>
        <authorList>
            <person name="Vermitsky J.P."/>
            <person name="Edlind T.D."/>
        </authorList>
    </citation>
    <scope>FUNCTION</scope>
    <scope>INDUCTION</scope>
</reference>
<reference key="9">
    <citation type="journal article" date="2005" name="J. Biol. Chem.">
        <title>Phosphorylation of candida glabrata ATP-binding cassette transporter Cdr1p regulates drug efflux activity and ATPase stability.</title>
        <authorList>
            <person name="Wada S."/>
            <person name="Tanabe K."/>
            <person name="Yamazaki A."/>
            <person name="Niimi M."/>
            <person name="Uehara Y."/>
            <person name="Niimi K."/>
            <person name="Lamping E."/>
            <person name="Cannon R.D."/>
            <person name="Monk B.C."/>
        </authorList>
    </citation>
    <scope>FUNCTION</scope>
    <scope>PHOSPHORYLATION AT SER-307 AND SER-484</scope>
    <scope>MUTAGENESIS OF SER-307 AND SER-484</scope>
</reference>
<reference key="10">
    <citation type="journal article" date="2006" name="J. Antimicrob. Chemother.">
        <title>Proteomic analysis of experimentally induced azole resistance in Candida glabrata.</title>
        <authorList>
            <person name="Rogers P.D."/>
            <person name="Vermitsky J.P."/>
            <person name="Edlind T.D."/>
            <person name="Hilliard G.M."/>
        </authorList>
    </citation>
    <scope>INDUCTION</scope>
</reference>
<reference key="11">
    <citation type="journal article" date="2006" name="J. Clin. Microbiol.">
        <title>Azole resistance of Candida glabrata in a case of recurrent fungemia.</title>
        <authorList>
            <person name="Posteraro B."/>
            <person name="Tumbarello M."/>
            <person name="La Sorda M."/>
            <person name="Spanu T."/>
            <person name="Trecarichi E.M."/>
            <person name="De Bernardis F."/>
            <person name="Scoppettuolo G."/>
            <person name="Sanguinetti M."/>
            <person name="Fadda G."/>
        </authorList>
    </citation>
    <scope>INDUCTION</scope>
</reference>
<reference key="12">
    <citation type="journal article" date="2006" name="Mol. Microbiol.">
        <title>Pdr1 regulates multidrug resistance in Candida glabrata: gene disruption and genome-wide expression studies.</title>
        <authorList>
            <person name="Vermitsky J.P."/>
            <person name="Earhart K.D."/>
            <person name="Smith W.L."/>
            <person name="Homayouni R."/>
            <person name="Edlind T.D."/>
            <person name="Rogers P.D."/>
        </authorList>
    </citation>
    <scope>FUNCTION</scope>
    <scope>INDUCTION</scope>
    <scope>DISRUPTION PHENOTYPE</scope>
</reference>
<reference key="13">
    <citation type="journal article" date="2007" name="Antimicrob. Agents Chemother.">
        <title>Reduced susceptibility to polyenes associated with a missense mutation in the ERG6 gene in a clinical isolate of Candida glabrata with pseudohyphal growth.</title>
        <authorList>
            <person name="Vandeputte P."/>
            <person name="Tronchin G."/>
            <person name="Berges T."/>
            <person name="Hennequin C."/>
            <person name="Chabasse D."/>
            <person name="Bouchara J.P."/>
        </authorList>
    </citation>
    <scope>INDUCTION</scope>
</reference>
<reference key="14">
    <citation type="journal article" date="2007" name="J. Clin. Microbiol.">
        <title>Changes in karyotype and azole susceptibility of sequential bloodstream isolates from patients with Candida glabrata candidemia.</title>
        <authorList>
            <person name="Shin J.H."/>
            <person name="Chae M.J."/>
            <person name="Song J.W."/>
            <person name="Jung S.I."/>
            <person name="Cho D."/>
            <person name="Kee S.J."/>
            <person name="Kim S.H."/>
            <person name="Shin M.G."/>
            <person name="Suh S.P."/>
            <person name="Ryang D.W."/>
        </authorList>
    </citation>
    <scope>FUNCTION</scope>
    <scope>INDUCTION</scope>
</reference>
<reference key="15">
    <citation type="journal article" date="2008" name="Antimicrob. Agents Chemother.">
        <title>Antifungal resistance of Candida glabrata vaginal isolates and development of a quantitative reverse transcription-PCR-based azole susceptibility assay.</title>
        <authorList>
            <person name="Gygax S.E."/>
            <person name="Vermitsky J.P."/>
            <person name="Chadwick S.G."/>
            <person name="Self M.J."/>
            <person name="Zimmerman J.A."/>
            <person name="Mordechai E."/>
            <person name="Adelson M.E."/>
            <person name="Trama J.P."/>
        </authorList>
    </citation>
    <scope>FUNCTION</scope>
    <scope>INDUCTION</scope>
</reference>
<reference key="16">
    <citation type="journal article" date="2008" name="J. Antimicrob. Chemother.">
        <title>Fungaemia caused by Candida glabrata with reduced susceptibility to fluconazole due to altered gene expression: risk factors, antifungal treatment and outcome.</title>
        <authorList>
            <person name="Tumbarello M."/>
            <person name="Sanguinetti M."/>
            <person name="Trecarichi E.M."/>
            <person name="La Sorda M."/>
            <person name="Rossi M."/>
            <person name="de Carolis E."/>
            <person name="de Gaetano Donati K."/>
            <person name="Fadda G."/>
            <person name="Cauda R."/>
            <person name="Posteraro B."/>
        </authorList>
    </citation>
    <scope>INDUCTION</scope>
</reference>
<reference key="17">
    <citation type="journal article" date="2009" name="Antimicrob. Agents Chemother.">
        <title>Hypersusceptibility to azole antifungals in a clinical isolate of Candida glabrata with reduced aerobic growth.</title>
        <authorList>
            <person name="Vandeputte P."/>
            <person name="Tronchin G."/>
            <person name="Rocher F."/>
            <person name="Renier G."/>
            <person name="Berges T."/>
            <person name="Chabasse D."/>
            <person name="Bouchara J.P."/>
        </authorList>
    </citation>
    <scope>INDUCTION</scope>
</reference>
<reference key="18">
    <citation type="journal article" date="2009" name="Int. J. Antimicrob. Agents">
        <title>Mutations in the CgPDR1 and CgERG11 genes in azole-resistant Candida glabrata clinical isolates from Slovakia.</title>
        <authorList>
            <person name="Berila N."/>
            <person name="Borecka S."/>
            <person name="Dzugasova V."/>
            <person name="Bojnansky J."/>
            <person name="Subik J."/>
        </authorList>
    </citation>
    <scope>INDUCTION</scope>
</reference>
<reference key="19">
    <citation type="journal article" date="2009" name="Med. Mycol.">
        <title>Expression of CgCDR1, CgCDR2, and CgERG11 in Candida glabrata biofilms formed by bloodstream isolates.</title>
        <authorList>
            <person name="Song J.W."/>
            <person name="Shin J.H."/>
            <person name="Kee S.J."/>
            <person name="Kim S.H."/>
            <person name="Shin M.G."/>
            <person name="Suh S.P."/>
            <person name="Ryang D.W."/>
        </authorList>
    </citation>
    <scope>INDUCTION</scope>
    <scope>FUNCTION</scope>
</reference>
<reference key="20">
    <citation type="journal article" date="2009" name="PLoS Pathog.">
        <title>Gain of function mutations in CgPDR1 of Candida glabrata not only mediate antifungal resistance but also enhance virulence.</title>
        <authorList>
            <person name="Ferrari S."/>
            <person name="Ischer F."/>
            <person name="Calabrese D."/>
            <person name="Posteraro B."/>
            <person name="Sanguinetti M."/>
            <person name="Fadda G."/>
            <person name="Rohde B."/>
            <person name="Bauser C."/>
            <person name="Bader O."/>
            <person name="Sanglard D."/>
        </authorList>
    </citation>
    <scope>INDUCTION</scope>
</reference>
<reference key="21">
    <citation type="journal article" date="2010" name="Antimicrob. Agents Chemother.">
        <title>Acquisition of flucytosine, azole, and caspofungin resistance in Candida glabrata bloodstream isolates serially obtained from a hematopoietic stem cell transplant recipient.</title>
        <authorList>
            <person name="Chapeland-Leclerc F."/>
            <person name="Hennequin C."/>
            <person name="Papon N."/>
            <person name="Noel T."/>
            <person name="Girard A."/>
            <person name="Socie G."/>
            <person name="Ribaud P."/>
            <person name="Lacroix C."/>
        </authorList>
    </citation>
    <scope>FUNCTION</scope>
    <scope>INDUCTION</scope>
</reference>
<reference key="22">
    <citation type="journal article" date="2010" name="Zhonghua Nei Ke Za Zhi">
        <title>Molecular mechanisms of fluconazole resistance in clinical isolates of Candida glabrata.</title>
        <authorList>
            <person name="Shen Y.Z."/>
            <person name="Lu H.Z."/>
            <person name="Zhang Y.X."/>
        </authorList>
    </citation>
    <scope>FUNCTION</scope>
    <scope>INDUCTION</scope>
</reference>
<reference key="23">
    <citation type="journal article" date="2011" name="Antimicrob. Agents Chemother.">
        <title>Voriconazole-induced inhibition of the fungicidal activity of amphotericin B in Candida strains with reduced susceptibility to voriconazole: an effect not predicted by the MIC value alone.</title>
        <authorList>
            <person name="Lignell A."/>
            <person name="Loewdin E."/>
            <person name="Cars O."/>
            <person name="Sanglard D."/>
            <person name="Sjoelin J."/>
        </authorList>
    </citation>
    <scope>INDUCTION</scope>
</reference>
<reference key="24">
    <citation type="journal article" date="2011" name="Antimicrob. Agents Chemother.">
        <title>Loss of mitochondrial functions associated with azole resistance in Candida glabrata results in enhanced virulence in mice.</title>
        <authorList>
            <person name="Ferrari S."/>
            <person name="Sanguinetti M."/>
            <person name="De Bernardis F."/>
            <person name="Torelli R."/>
            <person name="Posteraro B."/>
            <person name="Vandeputte P."/>
            <person name="Sanglard D."/>
        </authorList>
    </citation>
    <scope>INDUCTION</scope>
</reference>
<reference key="25">
    <citation type="journal article" date="2011" name="Biochem. Biophys. Res. Commun.">
        <title>Overcoming the heterologous bias: an in vivo functional analysis of multidrug efflux transporter, CgCdr1p in matched pair clinical isolates of Candida glabrata.</title>
        <authorList>
            <person name="Puri N."/>
            <person name="Manoharlal R."/>
            <person name="Sharma M."/>
            <person name="Sanglard D."/>
            <person name="Prasad R."/>
        </authorList>
    </citation>
    <scope>FUNCTION</scope>
    <scope>SUBCELLULAR LOCATION</scope>
    <scope>INDUCTION</scope>
    <scope>MUTAGENESIS OF CYS-188; SER-660 AND PHE-773</scope>
</reference>
<reference key="26">
    <citation type="journal article" date="2011" name="Eukaryot. Cell">
        <title>Regulation of the CgPdr1 transcription factor from the pathogen Candida glabrata.</title>
        <authorList>
            <person name="Paul S."/>
            <person name="Schmidt J.A."/>
            <person name="Moye-Rowley W.S."/>
        </authorList>
    </citation>
    <scope>INDUCTION</scope>
</reference>
<reference key="27">
    <citation type="journal article" date="2011" name="Eukaryot. Cell">
        <title>Genomewide expression profile analysis of the Candida glabrata Pdr1 regulon.</title>
        <authorList>
            <person name="Caudle K.E."/>
            <person name="Barker K.S."/>
            <person name="Wiederhold N.P."/>
            <person name="Xu L."/>
            <person name="Homayouni R."/>
            <person name="Rogers P.D."/>
        </authorList>
    </citation>
    <scope>INDUCTION</scope>
</reference>
<reference key="28">
    <citation type="journal article" date="2011" name="PLoS ONE">
        <title>Contribution of CgPDR1-regulated genes in enhanced virulence of azole-resistant Candida glabrata.</title>
        <authorList>
            <person name="Ferrari S."/>
            <person name="Sanguinetti M."/>
            <person name="Torelli R."/>
            <person name="Posteraro B."/>
            <person name="Sanglard D."/>
        </authorList>
    </citation>
    <scope>FUNCTION</scope>
    <scope>INDUCTION</scope>
</reference>
<reference key="29">
    <citation type="journal article" date="2012" name="Antimicrob. Agents Chemother.">
        <title>The monoamine oxidase A inhibitor clorgyline is a broad-spectrum inhibitor of fungal ABC and MFS transporter efflux pump activities which reverses the azole resistance of Candida albicans and Candida glabrata clinical isolates.</title>
        <authorList>
            <person name="Holmes A.R."/>
            <person name="Keniya M.V."/>
            <person name="Ivnitski-Steele I."/>
            <person name="Monk B.C."/>
            <person name="Lamping E."/>
            <person name="Sklar L.A."/>
            <person name="Cannon R.D."/>
        </authorList>
    </citation>
    <scope>ACTIVITY REGULATION</scope>
</reference>
<reference key="30">
    <citation type="journal article" date="2012" name="Mol. Microbiol.">
        <title>Specific interactions between the Candida albicans ABC transporter Cdr1p ectodomain and a D-octapeptide derivative inhibitor.</title>
        <authorList>
            <person name="Niimi K."/>
            <person name="Harding D.R."/>
            <person name="Holmes A.R."/>
            <person name="Lamping E."/>
            <person name="Niimi M."/>
            <person name="Tyndall J.D."/>
            <person name="Cannon R.D."/>
            <person name="Monk B.C."/>
        </authorList>
    </citation>
    <scope>FUNCTION</scope>
    <scope>ACTIVITY REGULATION</scope>
</reference>
<reference key="31">
    <citation type="journal article" date="2013" name="Antimicrob. Agents Chemother.">
        <title>Milbemycins: more than efflux inhibitors for fungal pathogens.</title>
        <authorList>
            <person name="Silva L.V."/>
            <person name="Sanguinetti M."/>
            <person name="Vandeputte P."/>
            <person name="Torelli R."/>
            <person name="Rochat B."/>
            <person name="Sanglard D."/>
        </authorList>
    </citation>
    <scope>ACTIVITY REGULATION</scope>
</reference>
<reference key="32">
    <citation type="journal article" date="2013" name="Antimicrob. Agents Chemother.">
        <title>STB5 is a negative regulator of azole resistance in Candida glabrata.</title>
        <authorList>
            <person name="Noble J.A."/>
            <person name="Tsai H.F."/>
            <person name="Suffis S.D."/>
            <person name="Su Q."/>
            <person name="Myers T.G."/>
            <person name="Bennett J.E."/>
        </authorList>
    </citation>
    <scope>INDUCTION</scope>
</reference>
<reference key="33">
    <citation type="journal article" date="2013" name="Antimicrob. Agents Chemother.">
        <title>Flucytosine antagonism of azole activity versus Candida glabrata: role of transcription factor Pdr1 and multidrug transporter Cdr1.</title>
        <authorList>
            <person name="Steier Z."/>
            <person name="Vermitsky J.P."/>
            <person name="Toner G."/>
            <person name="Gygax S.E."/>
            <person name="Edlind T."/>
            <person name="Katiyar S."/>
        </authorList>
    </citation>
    <scope>INDUCTION</scope>
</reference>
<reference key="34">
    <citation type="journal article" date="2014" name="Biofouling">
        <title>Effects of fluconazole on Candida glabrata biofilms and its relationship with ABC transporter gene expression.</title>
        <authorList>
            <person name="Fonseca E."/>
            <person name="Silva S."/>
            <person name="Rodrigues C.F."/>
            <person name="Alves C.T."/>
            <person name="Azeredo J."/>
            <person name="Henriques M."/>
        </authorList>
    </citation>
    <scope>INDUCTION</scope>
</reference>
<reference key="35">
    <citation type="journal article" date="2014" name="FEMS Yeast Res.">
        <title>Milbemycin A4 oxime as a probe of azole transport in Candida glabrata.</title>
        <authorList>
            <person name="Walker B."/>
            <person name="Izumikawa K."/>
            <person name="Tsai H.F."/>
            <person name="Bennett J.E."/>
        </authorList>
    </citation>
    <scope>ACTIVITY REGULATION</scope>
</reference>
<reference key="36">
    <citation type="journal article" date="2015" name="J. Med. Microbiol.">
        <title>Mechanisms of azole resistance among clinical isolates of Candida glabrata in Poland.</title>
        <authorList>
            <person name="Szweda P."/>
            <person name="Gucwa K."/>
            <person name="Romanowska E."/>
            <person name="Dzierzanowska-Fangrat K."/>
            <person name="Naumiuk L."/>
            <person name="Brillowska-Dabrowska A."/>
            <person name="Wojciechowska-Koszko I."/>
            <person name="Milewski S."/>
        </authorList>
    </citation>
    <scope>INDUCTION</scope>
</reference>
<reference key="37">
    <citation type="journal article" date="2016" name="Antimicrob. Agents Chemother.">
        <title>Activity of isavuconazole and other azoles against Candida clinical isolates and yeast model systems with known azole resistance mechanisms.</title>
        <authorList>
            <person name="Sanglard D."/>
            <person name="Coste A.T."/>
        </authorList>
    </citation>
    <scope>FUNCTION</scope>
</reference>
<reference key="38">
    <citation type="journal article" date="2016" name="MBio">
        <title>Heteroresistance to Fluconazole Is a Continuously Distributed Phenotype among Candida glabrata Clinical Strains Associated with In Vivo Persistence.</title>
        <authorList>
            <person name="Ben-Ami R."/>
            <person name="Zimmerman O."/>
            <person name="Finn T."/>
            <person name="Amit S."/>
            <person name="Novikov A."/>
            <person name="Wertheimer N."/>
            <person name="Lurie-Weinberger M."/>
            <person name="Berman J."/>
        </authorList>
    </citation>
    <scope>FUNCTION</scope>
    <scope>INDUCTION</scope>
</reference>
<reference key="39">
    <citation type="journal article" date="2017" name="Iran. J. Public Health">
        <title>Quantification of CDR1 gene expression in fluconazole resistant Candida glabrata strains using real-time PCR.</title>
        <authorList>
            <person name="Shahrokhi S."/>
            <person name="Noorbakhsh F."/>
            <person name="Rezaie S."/>
        </authorList>
    </citation>
    <scope>INDUCTION</scope>
</reference>
<reference key="40">
    <citation type="journal article" date="2017" name="Mycobiology">
        <title>Isolated from the urinary tract of a dog with diabetes mellitus.</title>
        <authorList>
            <person name="Kim M."/>
            <person name="Lee H."/>
            <person name="Hwang S.Y."/>
            <person name="Lee I."/>
            <person name="Jung W.H."/>
        </authorList>
    </citation>
    <scope>FUNCTION</scope>
    <scope>INDUCTION</scope>
</reference>
<reference key="41">
    <citation type="journal article" date="2018" name="MSphere">
        <title>Jjj1 is a negative regulator of Pdr1-mediated fluconazole resistance in Candida glabrata.</title>
        <authorList>
            <person name="Whaley S.G."/>
            <person name="Caudle K.E."/>
            <person name="Simonicova L."/>
            <person name="Zhang Q."/>
            <person name="Moye-Rowley W.S."/>
            <person name="Rogers P.D."/>
        </authorList>
    </citation>
    <scope>INDUCTION</scope>
</reference>
<reference key="42">
    <citation type="journal article" date="2018" name="Mycoses">
        <title>CgPDR1 gain-of-function mutations lead to azole-resistance and increased adhesion in clinical Candida glabrata strains.</title>
        <authorList>
            <person name="Ni Q."/>
            <person name="Wang C."/>
            <person name="Tian Y."/>
            <person name="Dong D."/>
            <person name="Jiang C."/>
            <person name="Mao E."/>
            <person name="Peng Y."/>
        </authorList>
    </citation>
    <scope>INDUCTION</scope>
</reference>
<reference key="43">
    <citation type="journal article" date="2018" name="Antimicrob. Agents Chemother.">
        <title>bloodstream isolates and fluconazole resistance affected by prolonged exposure: a 12-year single-center study in Belgium.</title>
        <authorList>
            <person name="Goemaere B."/>
            <person name="Lagrou K."/>
            <person name="Spriet I."/>
            <person name="Hendrickx M."/>
            <person name="Becker P."/>
        </authorList>
    </citation>
    <scope>FUNCTION</scope>
    <scope>INDUCTION</scope>
</reference>
<keyword id="KW-0067">ATP-binding</keyword>
<keyword id="KW-1003">Cell membrane</keyword>
<keyword id="KW-0325">Glycoprotein</keyword>
<keyword id="KW-0472">Membrane</keyword>
<keyword id="KW-0547">Nucleotide-binding</keyword>
<keyword id="KW-0597">Phosphoprotein</keyword>
<keyword id="KW-1185">Reference proteome</keyword>
<keyword id="KW-0677">Repeat</keyword>
<keyword id="KW-0812">Transmembrane</keyword>
<keyword id="KW-1133">Transmembrane helix</keyword>
<keyword id="KW-0813">Transport</keyword>
<name>CDR1_CANGA</name>
<accession>Q6FK23</accession>
<organism>
    <name type="scientific">Candida glabrata (strain ATCC 2001 / BCRC 20586 / JCM 3761 / NBRC 0622 / NRRL Y-65 / CBS 138)</name>
    <name type="common">Yeast</name>
    <name type="synonym">Nakaseomyces glabratus</name>
    <dbReference type="NCBI Taxonomy" id="284593"/>
    <lineage>
        <taxon>Eukaryota</taxon>
        <taxon>Fungi</taxon>
        <taxon>Dikarya</taxon>
        <taxon>Ascomycota</taxon>
        <taxon>Saccharomycotina</taxon>
        <taxon>Saccharomycetes</taxon>
        <taxon>Saccharomycetales</taxon>
        <taxon>Saccharomycetaceae</taxon>
        <taxon>Nakaseomyces</taxon>
    </lineage>
</organism>
<evidence type="ECO:0000255" key="1"/>
<evidence type="ECO:0000255" key="2">
    <source>
        <dbReference type="PROSITE-ProRule" id="PRU00434"/>
    </source>
</evidence>
<evidence type="ECO:0000255" key="3">
    <source>
        <dbReference type="PROSITE-ProRule" id="PRU00498"/>
    </source>
</evidence>
<evidence type="ECO:0000256" key="4">
    <source>
        <dbReference type="SAM" id="MobiDB-lite"/>
    </source>
</evidence>
<evidence type="ECO:0000269" key="5">
    <source>
    </source>
</evidence>
<evidence type="ECO:0000269" key="6">
    <source>
    </source>
</evidence>
<evidence type="ECO:0000269" key="7">
    <source>
    </source>
</evidence>
<evidence type="ECO:0000269" key="8">
    <source>
    </source>
</evidence>
<evidence type="ECO:0000269" key="9">
    <source>
    </source>
</evidence>
<evidence type="ECO:0000269" key="10">
    <source>
    </source>
</evidence>
<evidence type="ECO:0000269" key="11">
    <source>
    </source>
</evidence>
<evidence type="ECO:0000269" key="12">
    <source>
    </source>
</evidence>
<evidence type="ECO:0000269" key="13">
    <source>
    </source>
</evidence>
<evidence type="ECO:0000269" key="14">
    <source>
    </source>
</evidence>
<evidence type="ECO:0000269" key="15">
    <source>
    </source>
</evidence>
<evidence type="ECO:0000269" key="16">
    <source>
    </source>
</evidence>
<evidence type="ECO:0000269" key="17">
    <source>
    </source>
</evidence>
<evidence type="ECO:0000269" key="18">
    <source>
    </source>
</evidence>
<evidence type="ECO:0000269" key="19">
    <source>
    </source>
</evidence>
<evidence type="ECO:0000269" key="20">
    <source>
    </source>
</evidence>
<evidence type="ECO:0000269" key="21">
    <source>
    </source>
</evidence>
<evidence type="ECO:0000269" key="22">
    <source>
    </source>
</evidence>
<evidence type="ECO:0000269" key="23">
    <source>
    </source>
</evidence>
<evidence type="ECO:0000269" key="24">
    <source>
    </source>
</evidence>
<evidence type="ECO:0000269" key="25">
    <source>
    </source>
</evidence>
<evidence type="ECO:0000269" key="26">
    <source>
    </source>
</evidence>
<evidence type="ECO:0000269" key="27">
    <source>
    </source>
</evidence>
<evidence type="ECO:0000269" key="28">
    <source>
    </source>
</evidence>
<evidence type="ECO:0000269" key="29">
    <source>
    </source>
</evidence>
<evidence type="ECO:0000269" key="30">
    <source>
    </source>
</evidence>
<evidence type="ECO:0000269" key="31">
    <source>
    </source>
</evidence>
<evidence type="ECO:0000269" key="32">
    <source>
    </source>
</evidence>
<evidence type="ECO:0000269" key="33">
    <source>
    </source>
</evidence>
<evidence type="ECO:0000269" key="34">
    <source>
    </source>
</evidence>
<evidence type="ECO:0000269" key="35">
    <source>
    </source>
</evidence>
<evidence type="ECO:0000269" key="36">
    <source>
    </source>
</evidence>
<evidence type="ECO:0000269" key="37">
    <source>
    </source>
</evidence>
<evidence type="ECO:0000269" key="38">
    <source>
    </source>
</evidence>
<evidence type="ECO:0000269" key="39">
    <source>
    </source>
</evidence>
<evidence type="ECO:0000269" key="40">
    <source>
    </source>
</evidence>
<evidence type="ECO:0000269" key="41">
    <source>
    </source>
</evidence>
<evidence type="ECO:0000269" key="42">
    <source>
    </source>
</evidence>
<evidence type="ECO:0000269" key="43">
    <source>
    </source>
</evidence>
<evidence type="ECO:0000269" key="44">
    <source>
    </source>
</evidence>
<evidence type="ECO:0000269" key="45">
    <source>
    </source>
</evidence>
<evidence type="ECO:0000269" key="46">
    <source>
    </source>
</evidence>
<evidence type="ECO:0000303" key="47">
    <source>
    </source>
</evidence>
<evidence type="ECO:0000305" key="48"/>
<gene>
    <name evidence="47" type="primary">CDR1</name>
    <name type="ordered locus">CAGL0M01760g</name>
</gene>